<keyword id="KW-0004">4Fe-4S</keyword>
<keyword id="KW-0067">ATP-binding</keyword>
<keyword id="KW-0963">Cytoplasm</keyword>
<keyword id="KW-0408">Iron</keyword>
<keyword id="KW-0411">Iron-sulfur</keyword>
<keyword id="KW-0460">Magnesium</keyword>
<keyword id="KW-0479">Metal-binding</keyword>
<keyword id="KW-0547">Nucleotide-binding</keyword>
<keyword id="KW-0694">RNA-binding</keyword>
<keyword id="KW-0808">Transferase</keyword>
<keyword id="KW-0819">tRNA processing</keyword>
<keyword id="KW-0820">tRNA-binding</keyword>
<sequence>MQEIQKNTKKEQYNLNKLQKRLRRNVGEAIADFNMIEEGDRIMVCLSGGKDSYTMLEILRNLQQSAPINFSLVAVNLDQKQPGFPEHILPAYLEQLGVEYKIVEENTYGIVKEKIPEGKTTCSLCSRLRRGILYRTATELGATKIALGHHRDDILQTLFLNMFYGGKMKGMPPKLMSDDGKHIVIRPLAYCREKDIVRFAEAKAFPIIPCNLCGSQPNLQRQVIADMLRDWDKRYPGRIETMFSAMQNVVPSHLCDTNLFDFKGITHGSEVVDGGDLAFDREEIPLQPAGWQPEEDDTSLEALRLDVIEVK</sequence>
<comment type="function">
    <text evidence="1">Catalyzes the ATP-dependent 2-thiolation of cytidine in position 32 of tRNA, to form 2-thiocytidine (s(2)C32). The sulfur atoms are provided by the cysteine/cysteine desulfurase (IscS) system.</text>
</comment>
<comment type="catalytic activity">
    <reaction evidence="1">
        <text>cytidine(32) in tRNA + S-sulfanyl-L-cysteinyl-[cysteine desulfurase] + AH2 + ATP = 2-thiocytidine(32) in tRNA + L-cysteinyl-[cysteine desulfurase] + A + AMP + diphosphate + H(+)</text>
        <dbReference type="Rhea" id="RHEA:57048"/>
        <dbReference type="Rhea" id="RHEA-COMP:10288"/>
        <dbReference type="Rhea" id="RHEA-COMP:12157"/>
        <dbReference type="Rhea" id="RHEA-COMP:12158"/>
        <dbReference type="Rhea" id="RHEA-COMP:14821"/>
        <dbReference type="ChEBI" id="CHEBI:13193"/>
        <dbReference type="ChEBI" id="CHEBI:15378"/>
        <dbReference type="ChEBI" id="CHEBI:17499"/>
        <dbReference type="ChEBI" id="CHEBI:29950"/>
        <dbReference type="ChEBI" id="CHEBI:30616"/>
        <dbReference type="ChEBI" id="CHEBI:33019"/>
        <dbReference type="ChEBI" id="CHEBI:61963"/>
        <dbReference type="ChEBI" id="CHEBI:82748"/>
        <dbReference type="ChEBI" id="CHEBI:141453"/>
        <dbReference type="ChEBI" id="CHEBI:456215"/>
    </reaction>
    <physiologicalReaction direction="left-to-right" evidence="1">
        <dbReference type="Rhea" id="RHEA:57049"/>
    </physiologicalReaction>
</comment>
<comment type="cofactor">
    <cofactor evidence="1">
        <name>Mg(2+)</name>
        <dbReference type="ChEBI" id="CHEBI:18420"/>
    </cofactor>
</comment>
<comment type="cofactor">
    <cofactor evidence="1">
        <name>[4Fe-4S] cluster</name>
        <dbReference type="ChEBI" id="CHEBI:49883"/>
    </cofactor>
    <text evidence="1">Binds 1 [4Fe-4S] cluster per subunit. The cluster is chelated by three Cys residues, the fourth Fe has a free coordination site that may bind a sulfur atom transferred from the persulfide of IscS.</text>
</comment>
<comment type="pathway">
    <text evidence="1">tRNA modification.</text>
</comment>
<comment type="subunit">
    <text evidence="1">Homodimer.</text>
</comment>
<comment type="subcellular location">
    <subcellularLocation>
        <location evidence="1">Cytoplasm</location>
    </subcellularLocation>
</comment>
<comment type="miscellaneous">
    <text evidence="1">The thiolation reaction likely consists of two steps: a first activation step by ATP to form an adenylated intermediate of the target base of tRNA, and a second nucleophilic substitution step of the sulfur (S) atom supplied by the hydrosulfide attached to the Fe-S cluster.</text>
</comment>
<comment type="similarity">
    <text evidence="1">Belongs to the TtcA family.</text>
</comment>
<gene>
    <name evidence="1" type="primary">ttcA</name>
    <name type="ordered locus">SeHA_C1837</name>
</gene>
<proteinExistence type="inferred from homology"/>
<organism>
    <name type="scientific">Salmonella heidelberg (strain SL476)</name>
    <dbReference type="NCBI Taxonomy" id="454169"/>
    <lineage>
        <taxon>Bacteria</taxon>
        <taxon>Pseudomonadati</taxon>
        <taxon>Pseudomonadota</taxon>
        <taxon>Gammaproteobacteria</taxon>
        <taxon>Enterobacterales</taxon>
        <taxon>Enterobacteriaceae</taxon>
        <taxon>Salmonella</taxon>
    </lineage>
</organism>
<accession>B4TIS7</accession>
<reference key="1">
    <citation type="journal article" date="2011" name="J. Bacteriol.">
        <title>Comparative genomics of 28 Salmonella enterica isolates: evidence for CRISPR-mediated adaptive sublineage evolution.</title>
        <authorList>
            <person name="Fricke W.F."/>
            <person name="Mammel M.K."/>
            <person name="McDermott P.F."/>
            <person name="Tartera C."/>
            <person name="White D.G."/>
            <person name="Leclerc J.E."/>
            <person name="Ravel J."/>
            <person name="Cebula T.A."/>
        </authorList>
    </citation>
    <scope>NUCLEOTIDE SEQUENCE [LARGE SCALE GENOMIC DNA]</scope>
    <source>
        <strain>SL476</strain>
    </source>
</reference>
<evidence type="ECO:0000255" key="1">
    <source>
        <dbReference type="HAMAP-Rule" id="MF_01850"/>
    </source>
</evidence>
<name>TTCA_SALHS</name>
<protein>
    <recommendedName>
        <fullName evidence="1">tRNA-cytidine(32) 2-sulfurtransferase</fullName>
        <ecNumber evidence="1">2.8.1.-</ecNumber>
    </recommendedName>
    <alternativeName>
        <fullName evidence="1">Two-thiocytidine biosynthesis protein A</fullName>
    </alternativeName>
    <alternativeName>
        <fullName evidence="1">tRNA 2-thiocytidine biosynthesis protein TtcA</fullName>
    </alternativeName>
</protein>
<feature type="chain" id="PRO_1000188657" description="tRNA-cytidine(32) 2-sulfurtransferase">
    <location>
        <begin position="1"/>
        <end position="311"/>
    </location>
</feature>
<feature type="short sequence motif" description="PP-loop motif" evidence="1">
    <location>
        <begin position="47"/>
        <end position="52"/>
    </location>
</feature>
<feature type="binding site" evidence="1">
    <location>
        <position position="122"/>
    </location>
    <ligand>
        <name>[4Fe-4S] cluster</name>
        <dbReference type="ChEBI" id="CHEBI:49883"/>
    </ligand>
</feature>
<feature type="binding site" evidence="1">
    <location>
        <position position="125"/>
    </location>
    <ligand>
        <name>[4Fe-4S] cluster</name>
        <dbReference type="ChEBI" id="CHEBI:49883"/>
    </ligand>
</feature>
<feature type="binding site" evidence="1">
    <location>
        <position position="213"/>
    </location>
    <ligand>
        <name>[4Fe-4S] cluster</name>
        <dbReference type="ChEBI" id="CHEBI:49883"/>
    </ligand>
</feature>
<dbReference type="EC" id="2.8.1.-" evidence="1"/>
<dbReference type="EMBL" id="CP001120">
    <property type="protein sequence ID" value="ACF66478.1"/>
    <property type="molecule type" value="Genomic_DNA"/>
</dbReference>
<dbReference type="RefSeq" id="WP_001156218.1">
    <property type="nucleotide sequence ID" value="NC_011083.1"/>
</dbReference>
<dbReference type="SMR" id="B4TIS7"/>
<dbReference type="KEGG" id="seh:SeHA_C1837"/>
<dbReference type="HOGENOM" id="CLU_026481_0_0_6"/>
<dbReference type="Proteomes" id="UP000001866">
    <property type="component" value="Chromosome"/>
</dbReference>
<dbReference type="GO" id="GO:0005737">
    <property type="term" value="C:cytoplasm"/>
    <property type="evidence" value="ECO:0007669"/>
    <property type="project" value="UniProtKB-SubCell"/>
</dbReference>
<dbReference type="GO" id="GO:0051539">
    <property type="term" value="F:4 iron, 4 sulfur cluster binding"/>
    <property type="evidence" value="ECO:0007669"/>
    <property type="project" value="UniProtKB-UniRule"/>
</dbReference>
<dbReference type="GO" id="GO:0005524">
    <property type="term" value="F:ATP binding"/>
    <property type="evidence" value="ECO:0007669"/>
    <property type="project" value="UniProtKB-UniRule"/>
</dbReference>
<dbReference type="GO" id="GO:0000287">
    <property type="term" value="F:magnesium ion binding"/>
    <property type="evidence" value="ECO:0007669"/>
    <property type="project" value="UniProtKB-UniRule"/>
</dbReference>
<dbReference type="GO" id="GO:0016783">
    <property type="term" value="F:sulfurtransferase activity"/>
    <property type="evidence" value="ECO:0007669"/>
    <property type="project" value="UniProtKB-UniRule"/>
</dbReference>
<dbReference type="GO" id="GO:0000049">
    <property type="term" value="F:tRNA binding"/>
    <property type="evidence" value="ECO:0007669"/>
    <property type="project" value="UniProtKB-KW"/>
</dbReference>
<dbReference type="GO" id="GO:0034227">
    <property type="term" value="P:tRNA thio-modification"/>
    <property type="evidence" value="ECO:0007669"/>
    <property type="project" value="UniProtKB-UniRule"/>
</dbReference>
<dbReference type="CDD" id="cd24138">
    <property type="entry name" value="TtcA-like"/>
    <property type="match status" value="1"/>
</dbReference>
<dbReference type="FunFam" id="3.40.50.620:FF:000046">
    <property type="entry name" value="tRNA-cytidine(32) 2-sulfurtransferase"/>
    <property type="match status" value="1"/>
</dbReference>
<dbReference type="Gene3D" id="3.40.50.620">
    <property type="entry name" value="HUPs"/>
    <property type="match status" value="1"/>
</dbReference>
<dbReference type="HAMAP" id="MF_01850">
    <property type="entry name" value="TtcA"/>
    <property type="match status" value="1"/>
</dbReference>
<dbReference type="InterPro" id="IPR014729">
    <property type="entry name" value="Rossmann-like_a/b/a_fold"/>
</dbReference>
<dbReference type="InterPro" id="IPR011063">
    <property type="entry name" value="TilS/TtcA_N"/>
</dbReference>
<dbReference type="InterPro" id="IPR012089">
    <property type="entry name" value="tRNA_Cyd_32_2_STrfase"/>
</dbReference>
<dbReference type="InterPro" id="IPR035107">
    <property type="entry name" value="tRNA_thiolation_TtcA_Ctu1"/>
</dbReference>
<dbReference type="NCBIfam" id="NF007972">
    <property type="entry name" value="PRK10696.1"/>
    <property type="match status" value="1"/>
</dbReference>
<dbReference type="PANTHER" id="PTHR43686:SF1">
    <property type="entry name" value="AMINOTRAN_5 DOMAIN-CONTAINING PROTEIN"/>
    <property type="match status" value="1"/>
</dbReference>
<dbReference type="PANTHER" id="PTHR43686">
    <property type="entry name" value="SULFURTRANSFERASE-RELATED"/>
    <property type="match status" value="1"/>
</dbReference>
<dbReference type="Pfam" id="PF01171">
    <property type="entry name" value="ATP_bind_3"/>
    <property type="match status" value="1"/>
</dbReference>
<dbReference type="PIRSF" id="PIRSF004976">
    <property type="entry name" value="ATPase_YdaO"/>
    <property type="match status" value="1"/>
</dbReference>
<dbReference type="SUPFAM" id="SSF52402">
    <property type="entry name" value="Adenine nucleotide alpha hydrolases-like"/>
    <property type="match status" value="1"/>
</dbReference>